<accession>Q6FLB2</accession>
<protein>
    <recommendedName>
        <fullName>DASH complex subunit DAM1</fullName>
    </recommendedName>
    <alternativeName>
        <fullName>Outer kinetochore protein DAM1</fullName>
    </alternativeName>
</protein>
<keyword id="KW-0131">Cell cycle</keyword>
<keyword id="KW-0132">Cell division</keyword>
<keyword id="KW-0137">Centromere</keyword>
<keyword id="KW-0158">Chromosome</keyword>
<keyword id="KW-0159">Chromosome partition</keyword>
<keyword id="KW-0175">Coiled coil</keyword>
<keyword id="KW-0963">Cytoplasm</keyword>
<keyword id="KW-0206">Cytoskeleton</keyword>
<keyword id="KW-0995">Kinetochore</keyword>
<keyword id="KW-0493">Microtubule</keyword>
<keyword id="KW-0498">Mitosis</keyword>
<keyword id="KW-0539">Nucleus</keyword>
<keyword id="KW-1185">Reference proteome</keyword>
<proteinExistence type="inferred from homology"/>
<sequence length="307" mass="34876">MSQDIRKEDGVRSATEYKLSMSSNPGSRRSSMADAESFNDDNMVLKNDVLREYLLPQIKDLTDSVVTLDSNMTRLNFIHDNLVDLNESFGSLLYGLMCNSWCVEFPNAPTRFDKEIRLMNEIEELSAEKSKLKSRLNSLREKPNAQTSDEKMKKPSGISQPIFQKPNVRRPRNALNDENLHKFNRENPPVYDDKREADEDTNSEASFVSNPANSKDMQLFANGSSNNDPKSRLRRKSILHTIRNSIASTSDAYDRKKQQGIQMGRVSLGGGAARVVSGRNMFEQQRTTRHSTTGIPNRVVKKRPPFK</sequence>
<organism>
    <name type="scientific">Candida glabrata (strain ATCC 2001 / BCRC 20586 / JCM 3761 / NBRC 0622 / NRRL Y-65 / CBS 138)</name>
    <name type="common">Yeast</name>
    <name type="synonym">Nakaseomyces glabratus</name>
    <dbReference type="NCBI Taxonomy" id="284593"/>
    <lineage>
        <taxon>Eukaryota</taxon>
        <taxon>Fungi</taxon>
        <taxon>Dikarya</taxon>
        <taxon>Ascomycota</taxon>
        <taxon>Saccharomycotina</taxon>
        <taxon>Saccharomycetes</taxon>
        <taxon>Saccharomycetales</taxon>
        <taxon>Saccharomycetaceae</taxon>
        <taxon>Nakaseomyces</taxon>
    </lineage>
</organism>
<reference key="1">
    <citation type="journal article" date="2004" name="Nature">
        <title>Genome evolution in yeasts.</title>
        <authorList>
            <person name="Dujon B."/>
            <person name="Sherman D."/>
            <person name="Fischer G."/>
            <person name="Durrens P."/>
            <person name="Casaregola S."/>
            <person name="Lafontaine I."/>
            <person name="de Montigny J."/>
            <person name="Marck C."/>
            <person name="Neuveglise C."/>
            <person name="Talla E."/>
            <person name="Goffard N."/>
            <person name="Frangeul L."/>
            <person name="Aigle M."/>
            <person name="Anthouard V."/>
            <person name="Babour A."/>
            <person name="Barbe V."/>
            <person name="Barnay S."/>
            <person name="Blanchin S."/>
            <person name="Beckerich J.-M."/>
            <person name="Beyne E."/>
            <person name="Bleykasten C."/>
            <person name="Boisrame A."/>
            <person name="Boyer J."/>
            <person name="Cattolico L."/>
            <person name="Confanioleri F."/>
            <person name="de Daruvar A."/>
            <person name="Despons L."/>
            <person name="Fabre E."/>
            <person name="Fairhead C."/>
            <person name="Ferry-Dumazet H."/>
            <person name="Groppi A."/>
            <person name="Hantraye F."/>
            <person name="Hennequin C."/>
            <person name="Jauniaux N."/>
            <person name="Joyet P."/>
            <person name="Kachouri R."/>
            <person name="Kerrest A."/>
            <person name="Koszul R."/>
            <person name="Lemaire M."/>
            <person name="Lesur I."/>
            <person name="Ma L."/>
            <person name="Muller H."/>
            <person name="Nicaud J.-M."/>
            <person name="Nikolski M."/>
            <person name="Oztas S."/>
            <person name="Ozier-Kalogeropoulos O."/>
            <person name="Pellenz S."/>
            <person name="Potier S."/>
            <person name="Richard G.-F."/>
            <person name="Straub M.-L."/>
            <person name="Suleau A."/>
            <person name="Swennen D."/>
            <person name="Tekaia F."/>
            <person name="Wesolowski-Louvel M."/>
            <person name="Westhof E."/>
            <person name="Wirth B."/>
            <person name="Zeniou-Meyer M."/>
            <person name="Zivanovic Y."/>
            <person name="Bolotin-Fukuhara M."/>
            <person name="Thierry A."/>
            <person name="Bouchier C."/>
            <person name="Caudron B."/>
            <person name="Scarpelli C."/>
            <person name="Gaillardin C."/>
            <person name="Weissenbach J."/>
            <person name="Wincker P."/>
            <person name="Souciet J.-L."/>
        </authorList>
    </citation>
    <scope>NUCLEOTIDE SEQUENCE [LARGE SCALE GENOMIC DNA]</scope>
    <source>
        <strain>ATCC 2001 / BCRC 20586 / JCM 3761 / NBRC 0622 / NRRL Y-65 / CBS 138</strain>
    </source>
</reference>
<comment type="function">
    <text evidence="1">Component of the DASH complex that connects microtubules with kinetochores and couples microtubule depolymerisation to chromosome movement; it is involved in retrieving kinetochores to the spindle poles before their re-orientation on the spindle in early mitosis and allows microtubule depolymerization to pull chromosomes apart and resist detachment during anaphase. Kinetochores, consisting of a centromere-associated inner segment and a microtubule-contacting outer segment, play a crucial role in chromosome segregation by mediating the physical connection between centromeric DNA and microtubules. Kinetochores also serve as an input point for the spindle assembly checkpoint, which delays anaphase until all chromosomes have bioriented on the mitotic spindle.</text>
</comment>
<comment type="subunit">
    <text evidence="1 2">Component of the DASH complex consisting of ASK1, DAD1, DAD2, DAD3, DAD4, DAM1, DUO1, HSK3, SPC19 and SPC34, with a stoichiometry of one copy of each subunit per complex. Multiple DASH complexes oligomerize to form a ring that encircles spindle microtubules and organizes the rod-like NDC80 complexes of the outer kinetochore. DASH complex oligomerization strengthens microtubule attachments. Within the complex, DAM1 and DUO1 may form the microtubule connections (By similarity). On cytoplasmic microtubules, DASH complexes appear to form patches instead of rings (By similarity). Interacts with the outer kinetochore component NDC80; the interaction is direct (By similarity).</text>
</comment>
<comment type="subcellular location">
    <subcellularLocation>
        <location evidence="1">Nucleus</location>
    </subcellularLocation>
    <subcellularLocation>
        <location evidence="1">Cytoplasm</location>
        <location evidence="1">Cytoskeleton</location>
        <location evidence="1">Spindle</location>
    </subcellularLocation>
    <subcellularLocation>
        <location evidence="1">Chromosome</location>
        <location evidence="1">Centromere</location>
        <location evidence="1">Kinetochore</location>
    </subcellularLocation>
</comment>
<comment type="similarity">
    <text evidence="5">Belongs to the DASH complex DAM1 family.</text>
</comment>
<feature type="chain" id="PRO_0000127658" description="DASH complex subunit DAM1">
    <location>
        <begin position="1"/>
        <end position="307"/>
    </location>
</feature>
<feature type="region of interest" description="Disordered" evidence="4">
    <location>
        <begin position="1"/>
        <end position="34"/>
    </location>
</feature>
<feature type="region of interest" description="Disordered" evidence="4">
    <location>
        <begin position="133"/>
        <end position="212"/>
    </location>
</feature>
<feature type="region of interest" description="Disordered" evidence="4">
    <location>
        <begin position="280"/>
        <end position="307"/>
    </location>
</feature>
<feature type="coiled-coil region" evidence="3">
    <location>
        <begin position="113"/>
        <end position="142"/>
    </location>
</feature>
<feature type="compositionally biased region" description="Basic and acidic residues" evidence="4">
    <location>
        <begin position="1"/>
        <end position="11"/>
    </location>
</feature>
<feature type="compositionally biased region" description="Low complexity" evidence="4">
    <location>
        <begin position="20"/>
        <end position="32"/>
    </location>
</feature>
<feature type="compositionally biased region" description="Basic and acidic residues" evidence="4">
    <location>
        <begin position="138"/>
        <end position="153"/>
    </location>
</feature>
<feature type="compositionally biased region" description="Basic and acidic residues" evidence="4">
    <location>
        <begin position="178"/>
        <end position="197"/>
    </location>
</feature>
<feature type="compositionally biased region" description="Polar residues" evidence="4">
    <location>
        <begin position="203"/>
        <end position="212"/>
    </location>
</feature>
<feature type="compositionally biased region" description="Polar residues" evidence="4">
    <location>
        <begin position="282"/>
        <end position="295"/>
    </location>
</feature>
<dbReference type="EMBL" id="CR380958">
    <property type="protein sequence ID" value="CAG61952.1"/>
    <property type="molecule type" value="Genomic_DNA"/>
</dbReference>
<dbReference type="RefSeq" id="XP_448982.1">
    <property type="nucleotide sequence ID" value="XM_448982.1"/>
</dbReference>
<dbReference type="SMR" id="Q6FLB2"/>
<dbReference type="FunCoup" id="Q6FLB2">
    <property type="interactions" value="228"/>
</dbReference>
<dbReference type="STRING" id="284593.Q6FLB2"/>
<dbReference type="EnsemblFungi" id="CAGL0L04752g-T">
    <property type="protein sequence ID" value="CAGL0L04752g-T-p1"/>
    <property type="gene ID" value="CAGL0L04752g"/>
</dbReference>
<dbReference type="KEGG" id="cgr:2890705"/>
<dbReference type="CGD" id="CAL0135764">
    <property type="gene designation" value="CAGL0L04752g"/>
</dbReference>
<dbReference type="VEuPathDB" id="FungiDB:B1J91_L04752g"/>
<dbReference type="VEuPathDB" id="FungiDB:CAGL0L04752g"/>
<dbReference type="eggNOG" id="ENOG502S08R">
    <property type="taxonomic scope" value="Eukaryota"/>
</dbReference>
<dbReference type="HOGENOM" id="CLU_065404_0_0_1"/>
<dbReference type="InParanoid" id="Q6FLB2"/>
<dbReference type="OMA" id="GLMCNSW"/>
<dbReference type="Proteomes" id="UP000002428">
    <property type="component" value="Chromosome L"/>
</dbReference>
<dbReference type="GO" id="GO:0005737">
    <property type="term" value="C:cytoplasm"/>
    <property type="evidence" value="ECO:0007669"/>
    <property type="project" value="UniProtKB-KW"/>
</dbReference>
<dbReference type="GO" id="GO:0042729">
    <property type="term" value="C:DASH complex"/>
    <property type="evidence" value="ECO:0000250"/>
    <property type="project" value="UniProtKB"/>
</dbReference>
<dbReference type="GO" id="GO:1990537">
    <property type="term" value="C:mitotic spindle polar microtubule"/>
    <property type="evidence" value="ECO:0007669"/>
    <property type="project" value="TreeGrafter"/>
</dbReference>
<dbReference type="GO" id="GO:0044732">
    <property type="term" value="C:mitotic spindle pole body"/>
    <property type="evidence" value="ECO:0007669"/>
    <property type="project" value="TreeGrafter"/>
</dbReference>
<dbReference type="GO" id="GO:0042802">
    <property type="term" value="F:identical protein binding"/>
    <property type="evidence" value="ECO:0007669"/>
    <property type="project" value="EnsemblFungi"/>
</dbReference>
<dbReference type="GO" id="GO:0051010">
    <property type="term" value="F:microtubule plus-end binding"/>
    <property type="evidence" value="ECO:0007669"/>
    <property type="project" value="EnsemblFungi"/>
</dbReference>
<dbReference type="GO" id="GO:0008608">
    <property type="term" value="P:attachment of spindle microtubules to kinetochore"/>
    <property type="evidence" value="ECO:0000250"/>
    <property type="project" value="UniProtKB"/>
</dbReference>
<dbReference type="GO" id="GO:0051301">
    <property type="term" value="P:cell division"/>
    <property type="evidence" value="ECO:0007669"/>
    <property type="project" value="UniProtKB-KW"/>
</dbReference>
<dbReference type="GO" id="GO:0098653">
    <property type="term" value="P:centromere clustering"/>
    <property type="evidence" value="ECO:0007669"/>
    <property type="project" value="EnsemblFungi"/>
</dbReference>
<dbReference type="GO" id="GO:1990758">
    <property type="term" value="P:mitotic sister chromatid biorientation"/>
    <property type="evidence" value="ECO:0000250"/>
    <property type="project" value="UniProtKB"/>
</dbReference>
<dbReference type="GO" id="GO:0051987">
    <property type="term" value="P:positive regulation of attachment of spindle microtubules to kinetochore"/>
    <property type="evidence" value="ECO:0007669"/>
    <property type="project" value="EnsemblFungi"/>
</dbReference>
<dbReference type="GO" id="GO:0031116">
    <property type="term" value="P:positive regulation of microtubule polymerization"/>
    <property type="evidence" value="ECO:0007669"/>
    <property type="project" value="EnsemblFungi"/>
</dbReference>
<dbReference type="GO" id="GO:0071459">
    <property type="term" value="P:protein localization to chromosome, centromeric region"/>
    <property type="evidence" value="ECO:0007669"/>
    <property type="project" value="EnsemblFungi"/>
</dbReference>
<dbReference type="GO" id="GO:1990976">
    <property type="term" value="P:protein transport along microtubule to mitotic spindle pole body"/>
    <property type="evidence" value="ECO:0000250"/>
    <property type="project" value="UniProtKB"/>
</dbReference>
<dbReference type="InterPro" id="IPR013962">
    <property type="entry name" value="DASH_Dam1"/>
</dbReference>
<dbReference type="PANTHER" id="PTHR28113">
    <property type="entry name" value="DASH COMPLEX SUBUNIT DAM1"/>
    <property type="match status" value="1"/>
</dbReference>
<dbReference type="PANTHER" id="PTHR28113:SF1">
    <property type="entry name" value="DASH COMPLEX SUBUNIT DAM1"/>
    <property type="match status" value="1"/>
</dbReference>
<dbReference type="Pfam" id="PF08653">
    <property type="entry name" value="DASH_Dam1"/>
    <property type="match status" value="1"/>
</dbReference>
<evidence type="ECO:0000250" key="1">
    <source>
        <dbReference type="UniProtKB" id="P53267"/>
    </source>
</evidence>
<evidence type="ECO:0000250" key="2">
    <source>
        <dbReference type="UniProtKB" id="Q9HDZ6"/>
    </source>
</evidence>
<evidence type="ECO:0000255" key="3"/>
<evidence type="ECO:0000256" key="4">
    <source>
        <dbReference type="SAM" id="MobiDB-lite"/>
    </source>
</evidence>
<evidence type="ECO:0000305" key="5"/>
<gene>
    <name type="primary">DAM1</name>
    <name type="ordered locus">CAGL0L04752g</name>
</gene>
<name>DAM1_CANGA</name>